<protein>
    <recommendedName>
        <fullName evidence="1">Methionine--tRNA ligase</fullName>
        <ecNumber evidence="1">6.1.1.10</ecNumber>
    </recommendedName>
    <alternativeName>
        <fullName evidence="1">Methionyl-tRNA synthetase</fullName>
        <shortName evidence="1">MetRS</shortName>
    </alternativeName>
</protein>
<comment type="function">
    <text evidence="1">Is required not only for elongation of protein synthesis but also for the initiation of all mRNA translation through initiator tRNA(fMet) aminoacylation.</text>
</comment>
<comment type="catalytic activity">
    <reaction evidence="1">
        <text>tRNA(Met) + L-methionine + ATP = L-methionyl-tRNA(Met) + AMP + diphosphate</text>
        <dbReference type="Rhea" id="RHEA:13481"/>
        <dbReference type="Rhea" id="RHEA-COMP:9667"/>
        <dbReference type="Rhea" id="RHEA-COMP:9698"/>
        <dbReference type="ChEBI" id="CHEBI:30616"/>
        <dbReference type="ChEBI" id="CHEBI:33019"/>
        <dbReference type="ChEBI" id="CHEBI:57844"/>
        <dbReference type="ChEBI" id="CHEBI:78442"/>
        <dbReference type="ChEBI" id="CHEBI:78530"/>
        <dbReference type="ChEBI" id="CHEBI:456215"/>
        <dbReference type="EC" id="6.1.1.10"/>
    </reaction>
</comment>
<comment type="cofactor">
    <cofactor evidence="1">
        <name>Zn(2+)</name>
        <dbReference type="ChEBI" id="CHEBI:29105"/>
    </cofactor>
    <text evidence="1">Binds 1 zinc ion per subunit.</text>
</comment>
<comment type="subunit">
    <text evidence="1">Homodimer.</text>
</comment>
<comment type="subcellular location">
    <subcellularLocation>
        <location evidence="1">Cytoplasm</location>
    </subcellularLocation>
</comment>
<comment type="similarity">
    <text evidence="1">Belongs to the class-I aminoacyl-tRNA synthetase family. MetG type 1 subfamily.</text>
</comment>
<reference key="1">
    <citation type="journal article" date="1995" name="Science">
        <title>Whole-genome random sequencing and assembly of Haemophilus influenzae Rd.</title>
        <authorList>
            <person name="Fleischmann R.D."/>
            <person name="Adams M.D."/>
            <person name="White O."/>
            <person name="Clayton R.A."/>
            <person name="Kirkness E.F."/>
            <person name="Kerlavage A.R."/>
            <person name="Bult C.J."/>
            <person name="Tomb J.-F."/>
            <person name="Dougherty B.A."/>
            <person name="Merrick J.M."/>
            <person name="McKenney K."/>
            <person name="Sutton G.G."/>
            <person name="FitzHugh W."/>
            <person name="Fields C.A."/>
            <person name="Gocayne J.D."/>
            <person name="Scott J.D."/>
            <person name="Shirley R."/>
            <person name="Liu L.-I."/>
            <person name="Glodek A."/>
            <person name="Kelley J.M."/>
            <person name="Weidman J.F."/>
            <person name="Phillips C.A."/>
            <person name="Spriggs T."/>
            <person name="Hedblom E."/>
            <person name="Cotton M.D."/>
            <person name="Utterback T.R."/>
            <person name="Hanna M.C."/>
            <person name="Nguyen D.T."/>
            <person name="Saudek D.M."/>
            <person name="Brandon R.C."/>
            <person name="Fine L.D."/>
            <person name="Fritchman J.L."/>
            <person name="Fuhrmann J.L."/>
            <person name="Geoghagen N.S.M."/>
            <person name="Gnehm C.L."/>
            <person name="McDonald L.A."/>
            <person name="Small K.V."/>
            <person name="Fraser C.M."/>
            <person name="Smith H.O."/>
            <person name="Venter J.C."/>
        </authorList>
    </citation>
    <scope>NUCLEOTIDE SEQUENCE [LARGE SCALE GENOMIC DNA]</scope>
    <source>
        <strain>ATCC 51907 / DSM 11121 / KW20 / Rd</strain>
    </source>
</reference>
<feature type="chain" id="PRO_0000139135" description="Methionine--tRNA ligase">
    <location>
        <begin position="1"/>
        <end position="682"/>
    </location>
</feature>
<feature type="domain" description="tRNA-binding" evidence="1">
    <location>
        <begin position="580"/>
        <end position="682"/>
    </location>
</feature>
<feature type="short sequence motif" description="'HIGH' region">
    <location>
        <begin position="15"/>
        <end position="25"/>
    </location>
</feature>
<feature type="short sequence motif" description="'KMSKS' region">
    <location>
        <begin position="331"/>
        <end position="335"/>
    </location>
</feature>
<feature type="binding site" evidence="1">
    <location>
        <position position="146"/>
    </location>
    <ligand>
        <name>Zn(2+)</name>
        <dbReference type="ChEBI" id="CHEBI:29105"/>
    </ligand>
</feature>
<feature type="binding site" evidence="1">
    <location>
        <position position="149"/>
    </location>
    <ligand>
        <name>Zn(2+)</name>
        <dbReference type="ChEBI" id="CHEBI:29105"/>
    </ligand>
</feature>
<feature type="binding site" evidence="1">
    <location>
        <position position="159"/>
    </location>
    <ligand>
        <name>Zn(2+)</name>
        <dbReference type="ChEBI" id="CHEBI:29105"/>
    </ligand>
</feature>
<feature type="binding site" evidence="1">
    <location>
        <position position="162"/>
    </location>
    <ligand>
        <name>Zn(2+)</name>
        <dbReference type="ChEBI" id="CHEBI:29105"/>
    </ligand>
</feature>
<feature type="binding site" evidence="1">
    <location>
        <position position="334"/>
    </location>
    <ligand>
        <name>ATP</name>
        <dbReference type="ChEBI" id="CHEBI:30616"/>
    </ligand>
</feature>
<keyword id="KW-0030">Aminoacyl-tRNA synthetase</keyword>
<keyword id="KW-0067">ATP-binding</keyword>
<keyword id="KW-0963">Cytoplasm</keyword>
<keyword id="KW-0436">Ligase</keyword>
<keyword id="KW-0479">Metal-binding</keyword>
<keyword id="KW-0547">Nucleotide-binding</keyword>
<keyword id="KW-0648">Protein biosynthesis</keyword>
<keyword id="KW-1185">Reference proteome</keyword>
<keyword id="KW-0694">RNA-binding</keyword>
<keyword id="KW-0820">tRNA-binding</keyword>
<keyword id="KW-0862">Zinc</keyword>
<sequence>MTTQPRKILVTCALPYANGAIHLGHMLEHIQADIWVRFQRMRGNKIHFVCADDAHGTPIMLNADKLGITPEELIAKAKADHIRDFAGFNISFDNYHSTHSEENKQLTAEIYNKLKANGFIKSKVISQLFDPEKNMFLPDRFVKGTCPKCKAEDQYGDNCEVCASTYSPMDLINPRSAVSGTTPIVKESEHFFFDLPAFEGMLKEWTRSGSLQSEIANKMQEWFESDLQQWDISRDAPYFGFEIPGAKDKFFYVWLDAPIGYMASFKNLCNREGIDFNEFWAEGSDAELYHFIGKDIVYFHSLFWPAMLEGSGYRKPTNVFAHGYVTVDGAKMSKSRGTFIQASTYLNHIDPECLRYYYAAKLNDRIEDLDFNLEDFVQRVNTDIVNKLVNLASRNAGFIAKRFEGKLADKLEDKSLFAEFTAQAEQIAAYYESREYNKTIREIMALTDKANKYIDEKAPWVIAKEEGKEAELQAVCSMGIELFRVLMSYLKPVLPKLAERAETFLQAELRWDNIHQPLLGHTLAPFKALFSRLEKKQIDAVVEETKALFAAANKAAEKTEAKPTALSAVEPIAETITIDDFAKLDMRVAKVLKCEAVPESNKLLRFELDLGDHTRQVFSGIKAAYNKPEELEGRFVIMVANLAPRKMKFGVSEGMILSAGTGGSDLFLLSADSGVTAGMQVK</sequence>
<proteinExistence type="inferred from homology"/>
<dbReference type="EC" id="6.1.1.10" evidence="1"/>
<dbReference type="EMBL" id="L42023">
    <property type="protein sequence ID" value="AAC22924.1"/>
    <property type="molecule type" value="Genomic_DNA"/>
</dbReference>
<dbReference type="PIR" id="I64113">
    <property type="entry name" value="I64113"/>
</dbReference>
<dbReference type="RefSeq" id="NP_439429.1">
    <property type="nucleotide sequence ID" value="NC_000907.1"/>
</dbReference>
<dbReference type="SMR" id="P43828"/>
<dbReference type="STRING" id="71421.HI_1276"/>
<dbReference type="BindingDB" id="P43828"/>
<dbReference type="ChEMBL" id="CHEMBL1641340"/>
<dbReference type="EnsemblBacteria" id="AAC22924">
    <property type="protein sequence ID" value="AAC22924"/>
    <property type="gene ID" value="HI_1276"/>
</dbReference>
<dbReference type="KEGG" id="hin:HI_1276"/>
<dbReference type="PATRIC" id="fig|71421.8.peg.1327"/>
<dbReference type="eggNOG" id="COG0073">
    <property type="taxonomic scope" value="Bacteria"/>
</dbReference>
<dbReference type="eggNOG" id="COG0143">
    <property type="taxonomic scope" value="Bacteria"/>
</dbReference>
<dbReference type="HOGENOM" id="CLU_009710_7_0_6"/>
<dbReference type="OrthoDB" id="9810191at2"/>
<dbReference type="PhylomeDB" id="P43828"/>
<dbReference type="BioCyc" id="HINF71421:G1GJ1-1301-MONOMER"/>
<dbReference type="Proteomes" id="UP000000579">
    <property type="component" value="Chromosome"/>
</dbReference>
<dbReference type="GO" id="GO:0005829">
    <property type="term" value="C:cytosol"/>
    <property type="evidence" value="ECO:0000318"/>
    <property type="project" value="GO_Central"/>
</dbReference>
<dbReference type="GO" id="GO:0005524">
    <property type="term" value="F:ATP binding"/>
    <property type="evidence" value="ECO:0007669"/>
    <property type="project" value="UniProtKB-UniRule"/>
</dbReference>
<dbReference type="GO" id="GO:0046872">
    <property type="term" value="F:metal ion binding"/>
    <property type="evidence" value="ECO:0007669"/>
    <property type="project" value="UniProtKB-KW"/>
</dbReference>
<dbReference type="GO" id="GO:0004825">
    <property type="term" value="F:methionine-tRNA ligase activity"/>
    <property type="evidence" value="ECO:0000318"/>
    <property type="project" value="GO_Central"/>
</dbReference>
<dbReference type="GO" id="GO:0000049">
    <property type="term" value="F:tRNA binding"/>
    <property type="evidence" value="ECO:0007669"/>
    <property type="project" value="UniProtKB-KW"/>
</dbReference>
<dbReference type="GO" id="GO:0006431">
    <property type="term" value="P:methionyl-tRNA aminoacylation"/>
    <property type="evidence" value="ECO:0000318"/>
    <property type="project" value="GO_Central"/>
</dbReference>
<dbReference type="CDD" id="cd07957">
    <property type="entry name" value="Anticodon_Ia_Met"/>
    <property type="match status" value="1"/>
</dbReference>
<dbReference type="CDD" id="cd00814">
    <property type="entry name" value="MetRS_core"/>
    <property type="match status" value="1"/>
</dbReference>
<dbReference type="CDD" id="cd02800">
    <property type="entry name" value="tRNA_bind_EcMetRS_like"/>
    <property type="match status" value="1"/>
</dbReference>
<dbReference type="FunFam" id="1.10.730.10:FF:000005">
    <property type="entry name" value="Methionine--tRNA ligase"/>
    <property type="match status" value="1"/>
</dbReference>
<dbReference type="FunFam" id="2.20.28.20:FF:000001">
    <property type="entry name" value="Methionine--tRNA ligase"/>
    <property type="match status" value="1"/>
</dbReference>
<dbReference type="FunFam" id="2.40.50.140:FF:000042">
    <property type="entry name" value="Methionine--tRNA ligase"/>
    <property type="match status" value="1"/>
</dbReference>
<dbReference type="Gene3D" id="3.40.50.620">
    <property type="entry name" value="HUPs"/>
    <property type="match status" value="1"/>
</dbReference>
<dbReference type="Gene3D" id="1.10.730.10">
    <property type="entry name" value="Isoleucyl-tRNA Synthetase, Domain 1"/>
    <property type="match status" value="1"/>
</dbReference>
<dbReference type="Gene3D" id="2.20.28.20">
    <property type="entry name" value="Methionyl-tRNA synthetase, Zn-domain"/>
    <property type="match status" value="1"/>
</dbReference>
<dbReference type="Gene3D" id="2.40.50.140">
    <property type="entry name" value="Nucleic acid-binding proteins"/>
    <property type="match status" value="1"/>
</dbReference>
<dbReference type="HAMAP" id="MF_00098">
    <property type="entry name" value="Met_tRNA_synth_type1"/>
    <property type="match status" value="1"/>
</dbReference>
<dbReference type="InterPro" id="IPR001412">
    <property type="entry name" value="aa-tRNA-synth_I_CS"/>
</dbReference>
<dbReference type="InterPro" id="IPR041872">
    <property type="entry name" value="Anticodon_Met"/>
</dbReference>
<dbReference type="InterPro" id="IPR004495">
    <property type="entry name" value="Met-tRNA-synth_bsu_C"/>
</dbReference>
<dbReference type="InterPro" id="IPR023458">
    <property type="entry name" value="Met-tRNA_ligase_1"/>
</dbReference>
<dbReference type="InterPro" id="IPR014758">
    <property type="entry name" value="Met-tRNA_synth"/>
</dbReference>
<dbReference type="InterPro" id="IPR015413">
    <property type="entry name" value="Methionyl/Leucyl_tRNA_Synth"/>
</dbReference>
<dbReference type="InterPro" id="IPR033911">
    <property type="entry name" value="MetRS_core"/>
</dbReference>
<dbReference type="InterPro" id="IPR029038">
    <property type="entry name" value="MetRS_Zn"/>
</dbReference>
<dbReference type="InterPro" id="IPR012340">
    <property type="entry name" value="NA-bd_OB-fold"/>
</dbReference>
<dbReference type="InterPro" id="IPR014729">
    <property type="entry name" value="Rossmann-like_a/b/a_fold"/>
</dbReference>
<dbReference type="InterPro" id="IPR002547">
    <property type="entry name" value="tRNA-bd_dom"/>
</dbReference>
<dbReference type="InterPro" id="IPR009080">
    <property type="entry name" value="tRNAsynth_Ia_anticodon-bd"/>
</dbReference>
<dbReference type="NCBIfam" id="TIGR00398">
    <property type="entry name" value="metG"/>
    <property type="match status" value="1"/>
</dbReference>
<dbReference type="NCBIfam" id="TIGR00399">
    <property type="entry name" value="metG_C_term"/>
    <property type="match status" value="1"/>
</dbReference>
<dbReference type="NCBIfam" id="NF001100">
    <property type="entry name" value="PRK00133.1"/>
    <property type="match status" value="1"/>
</dbReference>
<dbReference type="PANTHER" id="PTHR45765">
    <property type="entry name" value="METHIONINE--TRNA LIGASE"/>
    <property type="match status" value="1"/>
</dbReference>
<dbReference type="PANTHER" id="PTHR45765:SF1">
    <property type="entry name" value="METHIONINE--TRNA LIGASE, CYTOPLASMIC"/>
    <property type="match status" value="1"/>
</dbReference>
<dbReference type="Pfam" id="PF19303">
    <property type="entry name" value="Anticodon_3"/>
    <property type="match status" value="1"/>
</dbReference>
<dbReference type="Pfam" id="PF09334">
    <property type="entry name" value="tRNA-synt_1g"/>
    <property type="match status" value="1"/>
</dbReference>
<dbReference type="Pfam" id="PF01588">
    <property type="entry name" value="tRNA_bind"/>
    <property type="match status" value="1"/>
</dbReference>
<dbReference type="PRINTS" id="PR01041">
    <property type="entry name" value="TRNASYNTHMET"/>
</dbReference>
<dbReference type="SUPFAM" id="SSF47323">
    <property type="entry name" value="Anticodon-binding domain of a subclass of class I aminoacyl-tRNA synthetases"/>
    <property type="match status" value="1"/>
</dbReference>
<dbReference type="SUPFAM" id="SSF57770">
    <property type="entry name" value="Methionyl-tRNA synthetase (MetRS), Zn-domain"/>
    <property type="match status" value="1"/>
</dbReference>
<dbReference type="SUPFAM" id="SSF50249">
    <property type="entry name" value="Nucleic acid-binding proteins"/>
    <property type="match status" value="1"/>
</dbReference>
<dbReference type="SUPFAM" id="SSF52374">
    <property type="entry name" value="Nucleotidylyl transferase"/>
    <property type="match status" value="1"/>
</dbReference>
<dbReference type="PROSITE" id="PS00178">
    <property type="entry name" value="AA_TRNA_LIGASE_I"/>
    <property type="match status" value="1"/>
</dbReference>
<dbReference type="PROSITE" id="PS50886">
    <property type="entry name" value="TRBD"/>
    <property type="match status" value="1"/>
</dbReference>
<name>SYM_HAEIN</name>
<evidence type="ECO:0000255" key="1">
    <source>
        <dbReference type="HAMAP-Rule" id="MF_00098"/>
    </source>
</evidence>
<accession>P43828</accession>
<gene>
    <name evidence="1" type="primary">metG</name>
    <name type="ordered locus">HI_1276</name>
</gene>
<organism>
    <name type="scientific">Haemophilus influenzae (strain ATCC 51907 / DSM 11121 / KW20 / Rd)</name>
    <dbReference type="NCBI Taxonomy" id="71421"/>
    <lineage>
        <taxon>Bacteria</taxon>
        <taxon>Pseudomonadati</taxon>
        <taxon>Pseudomonadota</taxon>
        <taxon>Gammaproteobacteria</taxon>
        <taxon>Pasteurellales</taxon>
        <taxon>Pasteurellaceae</taxon>
        <taxon>Haemophilus</taxon>
    </lineage>
</organism>